<reference key="1">
    <citation type="journal article" date="2009" name="PLoS Genet.">
        <title>Organised genome dynamics in the Escherichia coli species results in highly diverse adaptive paths.</title>
        <authorList>
            <person name="Touchon M."/>
            <person name="Hoede C."/>
            <person name="Tenaillon O."/>
            <person name="Barbe V."/>
            <person name="Baeriswyl S."/>
            <person name="Bidet P."/>
            <person name="Bingen E."/>
            <person name="Bonacorsi S."/>
            <person name="Bouchier C."/>
            <person name="Bouvet O."/>
            <person name="Calteau A."/>
            <person name="Chiapello H."/>
            <person name="Clermont O."/>
            <person name="Cruveiller S."/>
            <person name="Danchin A."/>
            <person name="Diard M."/>
            <person name="Dossat C."/>
            <person name="Karoui M.E."/>
            <person name="Frapy E."/>
            <person name="Garry L."/>
            <person name="Ghigo J.M."/>
            <person name="Gilles A.M."/>
            <person name="Johnson J."/>
            <person name="Le Bouguenec C."/>
            <person name="Lescat M."/>
            <person name="Mangenot S."/>
            <person name="Martinez-Jehanne V."/>
            <person name="Matic I."/>
            <person name="Nassif X."/>
            <person name="Oztas S."/>
            <person name="Petit M.A."/>
            <person name="Pichon C."/>
            <person name="Rouy Z."/>
            <person name="Ruf C.S."/>
            <person name="Schneider D."/>
            <person name="Tourret J."/>
            <person name="Vacherie B."/>
            <person name="Vallenet D."/>
            <person name="Medigue C."/>
            <person name="Rocha E.P.C."/>
            <person name="Denamur E."/>
        </authorList>
    </citation>
    <scope>NUCLEOTIDE SEQUENCE [LARGE SCALE GENOMIC DNA]</scope>
    <source>
        <strain>S88 / ExPEC</strain>
    </source>
</reference>
<keyword id="KW-0066">ATP synthesis</keyword>
<keyword id="KW-0997">Cell inner membrane</keyword>
<keyword id="KW-1003">Cell membrane</keyword>
<keyword id="KW-0139">CF(1)</keyword>
<keyword id="KW-0375">Hydrogen ion transport</keyword>
<keyword id="KW-0406">Ion transport</keyword>
<keyword id="KW-0472">Membrane</keyword>
<keyword id="KW-1185">Reference proteome</keyword>
<keyword id="KW-0813">Transport</keyword>
<sequence length="177" mass="19332">MSEFITVARPYAKAAFDFAVEHQSVERWQDMLAFAAEVTKNEQMAELLSGALAPETLAESFIAVCGEQLDENGQNLIRVMAENGRLNALPDVLEQFIHLRAVSEATAEVDVISAAALSEQQLAKISAAMEKRLSRKVKLNCKIDKSVMAGVIIRAGDMVIDGSVRGRLERLADVLQS</sequence>
<comment type="function">
    <text evidence="1">F(1)F(0) ATP synthase produces ATP from ADP in the presence of a proton or sodium gradient. F-type ATPases consist of two structural domains, F(1) containing the extramembraneous catalytic core and F(0) containing the membrane proton channel, linked together by a central stalk and a peripheral stalk. During catalysis, ATP synthesis in the catalytic domain of F(1) is coupled via a rotary mechanism of the central stalk subunits to proton translocation.</text>
</comment>
<comment type="function">
    <text evidence="1">This protein is part of the stalk that links CF(0) to CF(1). It either transmits conformational changes from CF(0) to CF(1) or is implicated in proton conduction.</text>
</comment>
<comment type="subunit">
    <text evidence="1">F-type ATPases have 2 components, F(1) - the catalytic core - and F(0) - the membrane proton channel. F(1) has five subunits: alpha(3), beta(3), gamma(1), delta(1), epsilon(1). F(0) has three main subunits: a(1), b(2) and c(10-14). The alpha and beta chains form an alternating ring which encloses part of the gamma chain. F(1) is attached to F(0) by a central stalk formed by the gamma and epsilon chains, while a peripheral stalk is formed by the delta and b chains.</text>
</comment>
<comment type="subcellular location">
    <subcellularLocation>
        <location evidence="1">Cell inner membrane</location>
        <topology evidence="1">Peripheral membrane protein</topology>
    </subcellularLocation>
</comment>
<comment type="similarity">
    <text evidence="1">Belongs to the ATPase delta chain family.</text>
</comment>
<feature type="chain" id="PRO_1000184697" description="ATP synthase subunit delta">
    <location>
        <begin position="1"/>
        <end position="177"/>
    </location>
</feature>
<dbReference type="EMBL" id="CU928161">
    <property type="protein sequence ID" value="CAR05363.1"/>
    <property type="molecule type" value="Genomic_DNA"/>
</dbReference>
<dbReference type="RefSeq" id="WP_001288587.1">
    <property type="nucleotide sequence ID" value="NC_011742.1"/>
</dbReference>
<dbReference type="EMDB" id="EMD-8357"/>
<dbReference type="EMDB" id="EMD-8358"/>
<dbReference type="EMDB" id="EMD-8359"/>
<dbReference type="SMR" id="B7MGF5"/>
<dbReference type="GeneID" id="93778232"/>
<dbReference type="KEGG" id="ecz:ECS88_4157"/>
<dbReference type="HOGENOM" id="CLU_085114_3_0_6"/>
<dbReference type="Proteomes" id="UP000000747">
    <property type="component" value="Chromosome"/>
</dbReference>
<dbReference type="GO" id="GO:0005886">
    <property type="term" value="C:plasma membrane"/>
    <property type="evidence" value="ECO:0007669"/>
    <property type="project" value="UniProtKB-SubCell"/>
</dbReference>
<dbReference type="GO" id="GO:0045259">
    <property type="term" value="C:proton-transporting ATP synthase complex"/>
    <property type="evidence" value="ECO:0007669"/>
    <property type="project" value="UniProtKB-KW"/>
</dbReference>
<dbReference type="GO" id="GO:0046933">
    <property type="term" value="F:proton-transporting ATP synthase activity, rotational mechanism"/>
    <property type="evidence" value="ECO:0007669"/>
    <property type="project" value="UniProtKB-UniRule"/>
</dbReference>
<dbReference type="FunFam" id="1.10.520.20:FF:000001">
    <property type="entry name" value="ATP synthase subunit delta"/>
    <property type="match status" value="1"/>
</dbReference>
<dbReference type="Gene3D" id="1.10.520.20">
    <property type="entry name" value="N-terminal domain of the delta subunit of the F1F0-ATP synthase"/>
    <property type="match status" value="1"/>
</dbReference>
<dbReference type="HAMAP" id="MF_01416">
    <property type="entry name" value="ATP_synth_delta_bact"/>
    <property type="match status" value="1"/>
</dbReference>
<dbReference type="InterPro" id="IPR026015">
    <property type="entry name" value="ATP_synth_OSCP/delta_N_sf"/>
</dbReference>
<dbReference type="InterPro" id="IPR020781">
    <property type="entry name" value="ATPase_OSCP/d_CS"/>
</dbReference>
<dbReference type="InterPro" id="IPR000711">
    <property type="entry name" value="ATPase_OSCP/dsu"/>
</dbReference>
<dbReference type="NCBIfam" id="TIGR01145">
    <property type="entry name" value="ATP_synt_delta"/>
    <property type="match status" value="1"/>
</dbReference>
<dbReference type="NCBIfam" id="NF004402">
    <property type="entry name" value="PRK05758.2-2"/>
    <property type="match status" value="1"/>
</dbReference>
<dbReference type="NCBIfam" id="NF004404">
    <property type="entry name" value="PRK05758.2-5"/>
    <property type="match status" value="1"/>
</dbReference>
<dbReference type="PANTHER" id="PTHR11910">
    <property type="entry name" value="ATP SYNTHASE DELTA CHAIN"/>
    <property type="match status" value="1"/>
</dbReference>
<dbReference type="Pfam" id="PF00213">
    <property type="entry name" value="OSCP"/>
    <property type="match status" value="1"/>
</dbReference>
<dbReference type="PRINTS" id="PR00125">
    <property type="entry name" value="ATPASEDELTA"/>
</dbReference>
<dbReference type="SUPFAM" id="SSF47928">
    <property type="entry name" value="N-terminal domain of the delta subunit of the F1F0-ATP synthase"/>
    <property type="match status" value="1"/>
</dbReference>
<dbReference type="PROSITE" id="PS00389">
    <property type="entry name" value="ATPASE_DELTA"/>
    <property type="match status" value="1"/>
</dbReference>
<protein>
    <recommendedName>
        <fullName evidence="1">ATP synthase subunit delta</fullName>
    </recommendedName>
    <alternativeName>
        <fullName evidence="1">ATP synthase F(1) sector subunit delta</fullName>
    </alternativeName>
    <alternativeName>
        <fullName evidence="1">F-type ATPase subunit delta</fullName>
        <shortName evidence="1">F-ATPase subunit delta</shortName>
    </alternativeName>
</protein>
<evidence type="ECO:0000255" key="1">
    <source>
        <dbReference type="HAMAP-Rule" id="MF_01416"/>
    </source>
</evidence>
<proteinExistence type="inferred from homology"/>
<name>ATPD_ECO45</name>
<accession>B7MGF5</accession>
<gene>
    <name evidence="1" type="primary">atpH</name>
    <name type="ordered locus">ECS88_4157</name>
</gene>
<organism>
    <name type="scientific">Escherichia coli O45:K1 (strain S88 / ExPEC)</name>
    <dbReference type="NCBI Taxonomy" id="585035"/>
    <lineage>
        <taxon>Bacteria</taxon>
        <taxon>Pseudomonadati</taxon>
        <taxon>Pseudomonadota</taxon>
        <taxon>Gammaproteobacteria</taxon>
        <taxon>Enterobacterales</taxon>
        <taxon>Enterobacteriaceae</taxon>
        <taxon>Escherichia</taxon>
    </lineage>
</organism>